<keyword id="KW-0903">Direct protein sequencing</keyword>
<keyword id="KW-1015">Disulfide bond</keyword>
<keyword id="KW-0872">Ion channel impairing toxin</keyword>
<keyword id="KW-0528">Neurotoxin</keyword>
<keyword id="KW-0964">Secreted</keyword>
<keyword id="KW-0800">Toxin</keyword>
<keyword id="KW-0738">Voltage-gated sodium channel impairing toxin</keyword>
<name>SCX9_ANDCR</name>
<evidence type="ECO:0000255" key="1">
    <source>
        <dbReference type="PROSITE-ProRule" id="PRU01210"/>
    </source>
</evidence>
<evidence type="ECO:0000269" key="2">
    <source>
    </source>
</evidence>
<evidence type="ECO:0000269" key="3">
    <source ref="1"/>
</evidence>
<evidence type="ECO:0000303" key="4">
    <source>
    </source>
</evidence>
<evidence type="ECO:0000303" key="5">
    <source ref="1"/>
</evidence>
<evidence type="ECO:0000305" key="6"/>
<evidence type="ECO:0000305" key="7">
    <source ref="1"/>
</evidence>
<dbReference type="SMR" id="C0HLG5"/>
<dbReference type="GO" id="GO:0005576">
    <property type="term" value="C:extracellular region"/>
    <property type="evidence" value="ECO:0000314"/>
    <property type="project" value="UniProtKB"/>
</dbReference>
<dbReference type="GO" id="GO:0019871">
    <property type="term" value="F:sodium channel inhibitor activity"/>
    <property type="evidence" value="ECO:0000314"/>
    <property type="project" value="UniProtKB"/>
</dbReference>
<dbReference type="GO" id="GO:0090729">
    <property type="term" value="F:toxin activity"/>
    <property type="evidence" value="ECO:0000314"/>
    <property type="project" value="UniProtKB"/>
</dbReference>
<dbReference type="GO" id="GO:0006952">
    <property type="term" value="P:defense response"/>
    <property type="evidence" value="ECO:0007669"/>
    <property type="project" value="InterPro"/>
</dbReference>
<dbReference type="CDD" id="cd23106">
    <property type="entry name" value="neurotoxins_LC_scorpion"/>
    <property type="match status" value="1"/>
</dbReference>
<dbReference type="Gene3D" id="3.30.30.10">
    <property type="entry name" value="Knottin, scorpion toxin-like"/>
    <property type="match status" value="1"/>
</dbReference>
<dbReference type="InterPro" id="IPR044062">
    <property type="entry name" value="LCN-type_CS_alpha_beta_dom"/>
</dbReference>
<dbReference type="InterPro" id="IPR003614">
    <property type="entry name" value="Scorpion_toxin-like"/>
</dbReference>
<dbReference type="InterPro" id="IPR036574">
    <property type="entry name" value="Scorpion_toxin-like_sf"/>
</dbReference>
<dbReference type="InterPro" id="IPR018218">
    <property type="entry name" value="Scorpion_toxinL"/>
</dbReference>
<dbReference type="InterPro" id="IPR002061">
    <property type="entry name" value="Scorpion_toxinL/defensin"/>
</dbReference>
<dbReference type="Pfam" id="PF00537">
    <property type="entry name" value="Toxin_3"/>
    <property type="match status" value="1"/>
</dbReference>
<dbReference type="PRINTS" id="PR00285">
    <property type="entry name" value="SCORPNTOXIN"/>
</dbReference>
<dbReference type="PRINTS" id="PR00284">
    <property type="entry name" value="TOXIN"/>
</dbReference>
<dbReference type="SMART" id="SM00505">
    <property type="entry name" value="Knot1"/>
    <property type="match status" value="1"/>
</dbReference>
<dbReference type="SUPFAM" id="SSF57095">
    <property type="entry name" value="Scorpion toxin-like"/>
    <property type="match status" value="1"/>
</dbReference>
<dbReference type="PROSITE" id="PS51863">
    <property type="entry name" value="LCN_CSAB"/>
    <property type="match status" value="1"/>
</dbReference>
<protein>
    <recommendedName>
        <fullName evidence="4 5">Alpha-mammal toxin AnCra1</fullName>
    </recommendedName>
</protein>
<proteinExistence type="evidence at protein level"/>
<accession>C0HLG5</accession>
<reference key="1">
    <citation type="journal article" date="2020" name="Biologia">
        <title>Characterization, molecular modeling and phylogenetic analysis of a long mammalian neurotoxin from the venom of the Iranian scorpion Androctonus crassicauda.</title>
        <authorList>
            <person name="Bayatzadeh M.A."/>
            <person name="Mirakabadi A.Z."/>
            <person name="Babaei N."/>
            <person name="Doulah A.H."/>
            <person name="Doosti A."/>
        </authorList>
    </citation>
    <scope>PROTEIN SEQUENCE</scope>
    <scope>FUNCTION</scope>
    <scope>SUBCELLULAR LOCATION</scope>
    <scope>MASS SPECTROMETRY</scope>
    <scope>TOXIC DOSE</scope>
    <source>
        <tissue>Venom</tissue>
    </source>
</reference>
<reference key="2">
    <citation type="journal article" date="2021" name="Mol. Biol. Rep.">
        <title>Expression and purification of recombinant alpha-toxin AnCra1 from the scorpion Androctonus crassicauda and its functional characterization on mammalian sodium channels.</title>
        <authorList>
            <person name="Bayatzadeh M.A."/>
            <person name="Zare Mirakabadi A."/>
            <person name="Babaei N."/>
            <person name="Doulah A."/>
            <person name="Doosti A."/>
        </authorList>
    </citation>
    <scope>FUNCTION</scope>
    <scope>RECOMBINANT EXPRESSION</scope>
    <scope>TOXIC DOSE</scope>
    <scope>3D-STRUCTURE MODELING</scope>
</reference>
<feature type="chain" id="PRO_0000451148" description="Alpha-mammal toxin AnCra1" evidence="3">
    <location>
        <begin position="1"/>
        <end position="64"/>
    </location>
</feature>
<feature type="domain" description="LCN-type CS-alpha/beta" evidence="1">
    <location>
        <begin position="2"/>
        <end position="64"/>
    </location>
</feature>
<feature type="disulfide bond" evidence="1">
    <location>
        <begin position="12"/>
        <end position="63"/>
    </location>
</feature>
<feature type="disulfide bond" evidence="1">
    <location>
        <begin position="16"/>
        <end position="36"/>
    </location>
</feature>
<feature type="disulfide bond" evidence="1">
    <location>
        <begin position="22"/>
        <end position="46"/>
    </location>
</feature>
<feature type="disulfide bond" evidence="1">
    <location>
        <begin position="26"/>
        <end position="48"/>
    </location>
</feature>
<sequence length="64" mass="7255">LKDGYIVDDVNCTYFCGRNAYCNEECIKLKGESGYCQWASPYGNACYCYKLPDHVRTKGPGRCN</sequence>
<comment type="function">
    <text evidence="2 3">Alpha toxins bind voltage-independently at site-3 of sodium channels (Nav) and inhibit the inactivation of the activated channels, thereby blocking neuronal transmission. This toxin is active against mammals (Ref.1). The recombinant toxin selectively inhibits the fast inactivation of hNav1.7/SCN9A channel (EC(50)=136.7 nM) (PubMed:34379289). Is potent in inhibiting the fast inactivation of hNav1.7 and has little effect on the steady-state inactivation (PubMed:34379289). In vivo, intravenous injection into mice induces muscle contraction, leading to severe paralysis and death (Ref.1).</text>
</comment>
<comment type="subcellular location">
    <subcellularLocation>
        <location evidence="3">Secreted</location>
    </subcellularLocation>
</comment>
<comment type="tissue specificity">
    <text evidence="7">Expressed by the venom gland.</text>
</comment>
<comment type="domain">
    <text evidence="6">Has the structural arrangement of an alpha-helix connected to antiparallel beta-sheets by disulfide bonds (CS-alpha/beta).</text>
</comment>
<comment type="mass spectrometry" mass="7255.23" method="MALDI" evidence="3"/>
<comment type="toxic dose">
    <text evidence="3">LD(50) of native toxin is 29.5 ug/kg by intravenous injection into mice. LD(100) is 39 ug/kg by intravenous injection into mice.</text>
</comment>
<comment type="toxic dose">
    <text evidence="2">LD(50) of recombinant toxin is 167 ug/kg by intravenous injection into mice.</text>
</comment>
<comment type="miscellaneous">
    <text evidence="2">Negative results: has very weak activity on hNav1.5/SCN5A sodium channels (EC(50)=31.9 uM).</text>
</comment>
<comment type="similarity">
    <text evidence="6">Belongs to the long (4 C-C) scorpion toxin superfamily. Sodium channel inhibitor family. Alpha subfamily.</text>
</comment>
<organism>
    <name type="scientific">Androctonus crassicauda</name>
    <name type="common">Arabian fat-tailed scorpion</name>
    <dbReference type="NCBI Taxonomy" id="122909"/>
    <lineage>
        <taxon>Eukaryota</taxon>
        <taxon>Metazoa</taxon>
        <taxon>Ecdysozoa</taxon>
        <taxon>Arthropoda</taxon>
        <taxon>Chelicerata</taxon>
        <taxon>Arachnida</taxon>
        <taxon>Scorpiones</taxon>
        <taxon>Buthida</taxon>
        <taxon>Buthoidea</taxon>
        <taxon>Buthidae</taxon>
        <taxon>Androctonus</taxon>
    </lineage>
</organism>